<dbReference type="EC" id="2.7.1.167" evidence="1"/>
<dbReference type="EC" id="2.7.7.70" evidence="1"/>
<dbReference type="EMBL" id="CP000153">
    <property type="protein sequence ID" value="ABB43859.1"/>
    <property type="molecule type" value="Genomic_DNA"/>
</dbReference>
<dbReference type="RefSeq" id="WP_011372213.1">
    <property type="nucleotide sequence ID" value="NC_007575.1"/>
</dbReference>
<dbReference type="SMR" id="Q30T22"/>
<dbReference type="STRING" id="326298.Suden_0580"/>
<dbReference type="KEGG" id="tdn:Suden_0580"/>
<dbReference type="eggNOG" id="COG0615">
    <property type="taxonomic scope" value="Bacteria"/>
</dbReference>
<dbReference type="eggNOG" id="COG2870">
    <property type="taxonomic scope" value="Bacteria"/>
</dbReference>
<dbReference type="HOGENOM" id="CLU_021150_2_1_7"/>
<dbReference type="OrthoDB" id="9802794at2"/>
<dbReference type="UniPathway" id="UPA00356">
    <property type="reaction ID" value="UER00437"/>
</dbReference>
<dbReference type="UniPathway" id="UPA00356">
    <property type="reaction ID" value="UER00439"/>
</dbReference>
<dbReference type="Proteomes" id="UP000002714">
    <property type="component" value="Chromosome"/>
</dbReference>
<dbReference type="GO" id="GO:0005829">
    <property type="term" value="C:cytosol"/>
    <property type="evidence" value="ECO:0007669"/>
    <property type="project" value="TreeGrafter"/>
</dbReference>
<dbReference type="GO" id="GO:0005524">
    <property type="term" value="F:ATP binding"/>
    <property type="evidence" value="ECO:0007669"/>
    <property type="project" value="UniProtKB-UniRule"/>
</dbReference>
<dbReference type="GO" id="GO:0033785">
    <property type="term" value="F:heptose 7-phosphate kinase activity"/>
    <property type="evidence" value="ECO:0007669"/>
    <property type="project" value="UniProtKB-UniRule"/>
</dbReference>
<dbReference type="GO" id="GO:0033786">
    <property type="term" value="F:heptose-1-phosphate adenylyltransferase activity"/>
    <property type="evidence" value="ECO:0007669"/>
    <property type="project" value="UniProtKB-UniRule"/>
</dbReference>
<dbReference type="GO" id="GO:0016773">
    <property type="term" value="F:phosphotransferase activity, alcohol group as acceptor"/>
    <property type="evidence" value="ECO:0007669"/>
    <property type="project" value="InterPro"/>
</dbReference>
<dbReference type="GO" id="GO:0097171">
    <property type="term" value="P:ADP-L-glycero-beta-D-manno-heptose biosynthetic process"/>
    <property type="evidence" value="ECO:0007669"/>
    <property type="project" value="UniProtKB-UniPathway"/>
</dbReference>
<dbReference type="CDD" id="cd01172">
    <property type="entry name" value="RfaE_like"/>
    <property type="match status" value="1"/>
</dbReference>
<dbReference type="Gene3D" id="3.40.1190.20">
    <property type="match status" value="1"/>
</dbReference>
<dbReference type="Gene3D" id="3.40.50.620">
    <property type="entry name" value="HUPs"/>
    <property type="match status" value="1"/>
</dbReference>
<dbReference type="HAMAP" id="MF_01603">
    <property type="entry name" value="HldE"/>
    <property type="match status" value="1"/>
</dbReference>
<dbReference type="InterPro" id="IPR023030">
    <property type="entry name" value="Bifunc_HldE"/>
</dbReference>
<dbReference type="InterPro" id="IPR004821">
    <property type="entry name" value="Cyt_trans-like"/>
</dbReference>
<dbReference type="InterPro" id="IPR011611">
    <property type="entry name" value="PfkB_dom"/>
</dbReference>
<dbReference type="InterPro" id="IPR011913">
    <property type="entry name" value="RfaE_dom_I"/>
</dbReference>
<dbReference type="InterPro" id="IPR011914">
    <property type="entry name" value="RfaE_dom_II"/>
</dbReference>
<dbReference type="InterPro" id="IPR029056">
    <property type="entry name" value="Ribokinase-like"/>
</dbReference>
<dbReference type="InterPro" id="IPR014729">
    <property type="entry name" value="Rossmann-like_a/b/a_fold"/>
</dbReference>
<dbReference type="NCBIfam" id="TIGR00125">
    <property type="entry name" value="cyt_tran_rel"/>
    <property type="match status" value="1"/>
</dbReference>
<dbReference type="NCBIfam" id="TIGR02198">
    <property type="entry name" value="rfaE_dom_I"/>
    <property type="match status" value="1"/>
</dbReference>
<dbReference type="NCBIfam" id="TIGR02199">
    <property type="entry name" value="rfaE_dom_II"/>
    <property type="match status" value="1"/>
</dbReference>
<dbReference type="PANTHER" id="PTHR46969">
    <property type="entry name" value="BIFUNCTIONAL PROTEIN HLDE"/>
    <property type="match status" value="1"/>
</dbReference>
<dbReference type="PANTHER" id="PTHR46969:SF1">
    <property type="entry name" value="BIFUNCTIONAL PROTEIN HLDE"/>
    <property type="match status" value="1"/>
</dbReference>
<dbReference type="Pfam" id="PF01467">
    <property type="entry name" value="CTP_transf_like"/>
    <property type="match status" value="1"/>
</dbReference>
<dbReference type="Pfam" id="PF00294">
    <property type="entry name" value="PfkB"/>
    <property type="match status" value="1"/>
</dbReference>
<dbReference type="SUPFAM" id="SSF52374">
    <property type="entry name" value="Nucleotidylyl transferase"/>
    <property type="match status" value="1"/>
</dbReference>
<dbReference type="SUPFAM" id="SSF53613">
    <property type="entry name" value="Ribokinase-like"/>
    <property type="match status" value="1"/>
</dbReference>
<protein>
    <recommendedName>
        <fullName evidence="1">Bifunctional protein HldE</fullName>
    </recommendedName>
    <domain>
        <recommendedName>
            <fullName evidence="1">D-beta-D-heptose 7-phosphate kinase</fullName>
            <ecNumber evidence="1">2.7.1.167</ecNumber>
        </recommendedName>
        <alternativeName>
            <fullName evidence="1">D-beta-D-heptose 7-phosphotransferase</fullName>
        </alternativeName>
        <alternativeName>
            <fullName evidence="1">D-glycero-beta-D-manno-heptose-7-phosphate kinase</fullName>
        </alternativeName>
    </domain>
    <domain>
        <recommendedName>
            <fullName evidence="1">D-beta-D-heptose 1-phosphate adenylyltransferase</fullName>
            <ecNumber evidence="1">2.7.7.70</ecNumber>
        </recommendedName>
        <alternativeName>
            <fullName evidence="1">D-glycero-beta-D-manno-heptose 1-phosphate adenylyltransferase</fullName>
        </alternativeName>
    </domain>
</protein>
<feature type="chain" id="PRO_0000255787" description="Bifunctional protein HldE">
    <location>
        <begin position="1"/>
        <end position="477"/>
    </location>
</feature>
<feature type="region of interest" description="Ribokinase">
    <location>
        <begin position="1"/>
        <end position="321"/>
    </location>
</feature>
<feature type="region of interest" description="Cytidylyltransferase">
    <location>
        <begin position="348"/>
        <end position="477"/>
    </location>
</feature>
<feature type="active site" evidence="1">
    <location>
        <position position="266"/>
    </location>
</feature>
<feature type="binding site" evidence="1">
    <location>
        <begin position="198"/>
        <end position="201"/>
    </location>
    <ligand>
        <name>ATP</name>
        <dbReference type="ChEBI" id="CHEBI:30616"/>
    </ligand>
</feature>
<evidence type="ECO:0000255" key="1">
    <source>
        <dbReference type="HAMAP-Rule" id="MF_01603"/>
    </source>
</evidence>
<gene>
    <name evidence="1" type="primary">hldE</name>
    <name type="ordered locus">Suden_0580</name>
</gene>
<sequence length="477" mass="51711">MKILKSFTPRILVIGDLMIDHYLWGNCERISPEAPVQIVDISKETTVLGGGGNVVNNLVALGAKVSVSGVIGNDENGVELLKLLREIDVNVDNIVIQEGRKTSKKSRVIAASQQILRYDKESKEEISKSSIEVILNSLAKDISRYDAVVLSDYSKGVLTKELCQGVISTCSKNGIKVLVDPKGSDYSKYSGAYLLTPNKKEAIQATKIDIKDKQSLKEALLKMKKDANLAISLITLSEDGVAIYDDEMKIFPTVAKEVFDVTGAGDTVIASIAFAISAGKSIEESAKFANLAAGVVVGKIGSATVSISEIEEYEASLHKSTSDAHIKGFEEIEAIVKRYKESGKKVVFTNGCFDILHVGHVKYLQIAKSFGDVLIVGLNSDTSVTRLKGPSRPVNIAEDRAYLLAALEAVDFVVPFEDDTPYELIKMIKPDTLVKGGDYEGKSVIGTEFAQELKLVDFVDGKSTTKTIQKIKGDLHV</sequence>
<name>HLDE_SULDN</name>
<keyword id="KW-0067">ATP-binding</keyword>
<keyword id="KW-0119">Carbohydrate metabolism</keyword>
<keyword id="KW-0418">Kinase</keyword>
<keyword id="KW-0511">Multifunctional enzyme</keyword>
<keyword id="KW-0547">Nucleotide-binding</keyword>
<keyword id="KW-0548">Nucleotidyltransferase</keyword>
<keyword id="KW-1185">Reference proteome</keyword>
<keyword id="KW-0808">Transferase</keyword>
<proteinExistence type="inferred from homology"/>
<reference key="1">
    <citation type="journal article" date="2008" name="Appl. Environ. Microbiol.">
        <title>Genome of the epsilonproteobacterial chemolithoautotroph Sulfurimonas denitrificans.</title>
        <authorList>
            <person name="Sievert S.M."/>
            <person name="Scott K.M."/>
            <person name="Klotz M.G."/>
            <person name="Chain P.S.G."/>
            <person name="Hauser L.J."/>
            <person name="Hemp J."/>
            <person name="Huegler M."/>
            <person name="Land M."/>
            <person name="Lapidus A."/>
            <person name="Larimer F.W."/>
            <person name="Lucas S."/>
            <person name="Malfatti S.A."/>
            <person name="Meyer F."/>
            <person name="Paulsen I.T."/>
            <person name="Ren Q."/>
            <person name="Simon J."/>
            <person name="Bailey K."/>
            <person name="Diaz E."/>
            <person name="Fitzpatrick K.A."/>
            <person name="Glover B."/>
            <person name="Gwatney N."/>
            <person name="Korajkic A."/>
            <person name="Long A."/>
            <person name="Mobberley J.M."/>
            <person name="Pantry S.N."/>
            <person name="Pazder G."/>
            <person name="Peterson S."/>
            <person name="Quintanilla J.D."/>
            <person name="Sprinkle R."/>
            <person name="Stephens J."/>
            <person name="Thomas P."/>
            <person name="Vaughn R."/>
            <person name="Weber M.J."/>
            <person name="Wooten L.L."/>
        </authorList>
    </citation>
    <scope>NUCLEOTIDE SEQUENCE [LARGE SCALE GENOMIC DNA]</scope>
    <source>
        <strain>ATCC 33889 / DSM 1251</strain>
    </source>
</reference>
<accession>Q30T22</accession>
<comment type="function">
    <text evidence="1">Catalyzes the phosphorylation of D-glycero-D-manno-heptose 7-phosphate at the C-1 position to selectively form D-glycero-beta-D-manno-heptose-1,7-bisphosphate.</text>
</comment>
<comment type="function">
    <text evidence="1">Catalyzes the ADP transfer from ATP to D-glycero-beta-D-manno-heptose 1-phosphate, yielding ADP-D-glycero-beta-D-manno-heptose.</text>
</comment>
<comment type="catalytic activity">
    <reaction evidence="1">
        <text>D-glycero-beta-D-manno-heptose 7-phosphate + ATP = D-glycero-beta-D-manno-heptose 1,7-bisphosphate + ADP + H(+)</text>
        <dbReference type="Rhea" id="RHEA:27473"/>
        <dbReference type="ChEBI" id="CHEBI:15378"/>
        <dbReference type="ChEBI" id="CHEBI:30616"/>
        <dbReference type="ChEBI" id="CHEBI:60204"/>
        <dbReference type="ChEBI" id="CHEBI:60208"/>
        <dbReference type="ChEBI" id="CHEBI:456216"/>
        <dbReference type="EC" id="2.7.1.167"/>
    </reaction>
</comment>
<comment type="catalytic activity">
    <reaction evidence="1">
        <text>D-glycero-beta-D-manno-heptose 1-phosphate + ATP + H(+) = ADP-D-glycero-beta-D-manno-heptose + diphosphate</text>
        <dbReference type="Rhea" id="RHEA:27465"/>
        <dbReference type="ChEBI" id="CHEBI:15378"/>
        <dbReference type="ChEBI" id="CHEBI:30616"/>
        <dbReference type="ChEBI" id="CHEBI:33019"/>
        <dbReference type="ChEBI" id="CHEBI:59967"/>
        <dbReference type="ChEBI" id="CHEBI:61593"/>
        <dbReference type="EC" id="2.7.7.70"/>
    </reaction>
</comment>
<comment type="pathway">
    <text evidence="1">Nucleotide-sugar biosynthesis; ADP-L-glycero-beta-D-manno-heptose biosynthesis; ADP-L-glycero-beta-D-manno-heptose from D-glycero-beta-D-manno-heptose 7-phosphate: step 1/4.</text>
</comment>
<comment type="pathway">
    <text evidence="1">Nucleotide-sugar biosynthesis; ADP-L-glycero-beta-D-manno-heptose biosynthesis; ADP-L-glycero-beta-D-manno-heptose from D-glycero-beta-D-manno-heptose 7-phosphate: step 3/4.</text>
</comment>
<comment type="subunit">
    <text evidence="1">Homodimer.</text>
</comment>
<comment type="similarity">
    <text evidence="1">In the N-terminal section; belongs to the carbohydrate kinase PfkB family.</text>
</comment>
<comment type="similarity">
    <text evidence="1">In the C-terminal section; belongs to the cytidylyltransferase family.</text>
</comment>
<organism>
    <name type="scientific">Sulfurimonas denitrificans (strain ATCC 33889 / DSM 1251)</name>
    <name type="common">Thiomicrospira denitrificans (strain ATCC 33889 / DSM 1251)</name>
    <dbReference type="NCBI Taxonomy" id="326298"/>
    <lineage>
        <taxon>Bacteria</taxon>
        <taxon>Pseudomonadati</taxon>
        <taxon>Campylobacterota</taxon>
        <taxon>Epsilonproteobacteria</taxon>
        <taxon>Campylobacterales</taxon>
        <taxon>Sulfurimonadaceae</taxon>
        <taxon>Sulfurimonas</taxon>
    </lineage>
</organism>